<name>TRUB_PARUW</name>
<accession>Q6MD66</accession>
<evidence type="ECO:0000255" key="1">
    <source>
        <dbReference type="HAMAP-Rule" id="MF_01080"/>
    </source>
</evidence>
<protein>
    <recommendedName>
        <fullName evidence="1">tRNA pseudouridine synthase B</fullName>
        <ecNumber evidence="1">5.4.99.25</ecNumber>
    </recommendedName>
    <alternativeName>
        <fullName evidence="1">tRNA pseudouridine(55) synthase</fullName>
        <shortName evidence="1">Psi55 synthase</shortName>
    </alternativeName>
    <alternativeName>
        <fullName evidence="1">tRNA pseudouridylate synthase</fullName>
    </alternativeName>
    <alternativeName>
        <fullName evidence="1">tRNA-uridine isomerase</fullName>
    </alternativeName>
</protein>
<reference key="1">
    <citation type="journal article" date="2004" name="Science">
        <title>Illuminating the evolutionary history of chlamydiae.</title>
        <authorList>
            <person name="Horn M."/>
            <person name="Collingro A."/>
            <person name="Schmitz-Esser S."/>
            <person name="Beier C.L."/>
            <person name="Purkhold U."/>
            <person name="Fartmann B."/>
            <person name="Brandt P."/>
            <person name="Nyakatura G.J."/>
            <person name="Droege M."/>
            <person name="Frishman D."/>
            <person name="Rattei T."/>
            <person name="Mewes H.-W."/>
            <person name="Wagner M."/>
        </authorList>
    </citation>
    <scope>NUCLEOTIDE SEQUENCE [LARGE SCALE GENOMIC DNA]</scope>
    <source>
        <strain>UWE25</strain>
    </source>
</reference>
<feature type="chain" id="PRO_0000121880" description="tRNA pseudouridine synthase B">
    <location>
        <begin position="1"/>
        <end position="262"/>
    </location>
</feature>
<feature type="active site" description="Nucleophile" evidence="1">
    <location>
        <position position="77"/>
    </location>
</feature>
<proteinExistence type="inferred from homology"/>
<keyword id="KW-0413">Isomerase</keyword>
<keyword id="KW-1185">Reference proteome</keyword>
<keyword id="KW-0819">tRNA processing</keyword>
<comment type="function">
    <text evidence="1">Responsible for synthesis of pseudouridine from uracil-55 in the psi GC loop of transfer RNAs.</text>
</comment>
<comment type="catalytic activity">
    <reaction evidence="1">
        <text>uridine(55) in tRNA = pseudouridine(55) in tRNA</text>
        <dbReference type="Rhea" id="RHEA:42532"/>
        <dbReference type="Rhea" id="RHEA-COMP:10101"/>
        <dbReference type="Rhea" id="RHEA-COMP:10102"/>
        <dbReference type="ChEBI" id="CHEBI:65314"/>
        <dbReference type="ChEBI" id="CHEBI:65315"/>
        <dbReference type="EC" id="5.4.99.25"/>
    </reaction>
</comment>
<comment type="similarity">
    <text evidence="1">Belongs to the pseudouridine synthase TruB family. Type 1 subfamily.</text>
</comment>
<sequence length="262" mass="29308">MINTCALKNYLEKSQKKESPAKETIVTSLNRSLSTPPSHLEGILLINKPKGKTSFSLVRDLRKRLGVKKIGHAGTLDPFATGVMVMLVGRNYTRLSDQFLLSDKEYIAEAYLGVVTDSYDCEGQVLSQSNIIPTLEQIKEAFSLFQGKIEQVPPMFSAKKQQGKKLYELARQGIVVERQPVKISIHTELLSYNYPYLNFRIECSKGTYIRSIAYDLGTKLGCGAHLSNLTRTRSGAFCLENCLNGAEIHTVTNLEQNLIRND</sequence>
<organism>
    <name type="scientific">Protochlamydia amoebophila (strain UWE25)</name>
    <dbReference type="NCBI Taxonomy" id="264201"/>
    <lineage>
        <taxon>Bacteria</taxon>
        <taxon>Pseudomonadati</taxon>
        <taxon>Chlamydiota</taxon>
        <taxon>Chlamydiia</taxon>
        <taxon>Parachlamydiales</taxon>
        <taxon>Parachlamydiaceae</taxon>
        <taxon>Candidatus Protochlamydia</taxon>
    </lineage>
</organism>
<gene>
    <name evidence="1" type="primary">truB</name>
    <name type="ordered locus">pc0759</name>
</gene>
<dbReference type="EC" id="5.4.99.25" evidence="1"/>
<dbReference type="EMBL" id="BX908798">
    <property type="protein sequence ID" value="CAF23483.1"/>
    <property type="molecule type" value="Genomic_DNA"/>
</dbReference>
<dbReference type="SMR" id="Q6MD66"/>
<dbReference type="STRING" id="264201.pc0759"/>
<dbReference type="eggNOG" id="COG0130">
    <property type="taxonomic scope" value="Bacteria"/>
</dbReference>
<dbReference type="HOGENOM" id="CLU_032087_2_0_0"/>
<dbReference type="Proteomes" id="UP000000529">
    <property type="component" value="Chromosome"/>
</dbReference>
<dbReference type="GO" id="GO:0003723">
    <property type="term" value="F:RNA binding"/>
    <property type="evidence" value="ECO:0007669"/>
    <property type="project" value="InterPro"/>
</dbReference>
<dbReference type="GO" id="GO:0160148">
    <property type="term" value="F:tRNA pseudouridine(55) synthase activity"/>
    <property type="evidence" value="ECO:0007669"/>
    <property type="project" value="UniProtKB-EC"/>
</dbReference>
<dbReference type="GO" id="GO:1990481">
    <property type="term" value="P:mRNA pseudouridine synthesis"/>
    <property type="evidence" value="ECO:0007669"/>
    <property type="project" value="TreeGrafter"/>
</dbReference>
<dbReference type="GO" id="GO:0031119">
    <property type="term" value="P:tRNA pseudouridine synthesis"/>
    <property type="evidence" value="ECO:0007669"/>
    <property type="project" value="UniProtKB-UniRule"/>
</dbReference>
<dbReference type="CDD" id="cd02573">
    <property type="entry name" value="PseudoU_synth_EcTruB"/>
    <property type="match status" value="1"/>
</dbReference>
<dbReference type="Gene3D" id="3.30.2350.10">
    <property type="entry name" value="Pseudouridine synthase"/>
    <property type="match status" value="1"/>
</dbReference>
<dbReference type="HAMAP" id="MF_01080">
    <property type="entry name" value="TruB_bact"/>
    <property type="match status" value="1"/>
</dbReference>
<dbReference type="InterPro" id="IPR020103">
    <property type="entry name" value="PsdUridine_synth_cat_dom_sf"/>
</dbReference>
<dbReference type="InterPro" id="IPR002501">
    <property type="entry name" value="PsdUridine_synth_N"/>
</dbReference>
<dbReference type="InterPro" id="IPR014780">
    <property type="entry name" value="tRNA_psdUridine_synth_TruB"/>
</dbReference>
<dbReference type="InterPro" id="IPR032819">
    <property type="entry name" value="TruB_C"/>
</dbReference>
<dbReference type="NCBIfam" id="TIGR00431">
    <property type="entry name" value="TruB"/>
    <property type="match status" value="1"/>
</dbReference>
<dbReference type="PANTHER" id="PTHR13767:SF2">
    <property type="entry name" value="PSEUDOURIDYLATE SYNTHASE TRUB1"/>
    <property type="match status" value="1"/>
</dbReference>
<dbReference type="PANTHER" id="PTHR13767">
    <property type="entry name" value="TRNA-PSEUDOURIDINE SYNTHASE"/>
    <property type="match status" value="1"/>
</dbReference>
<dbReference type="Pfam" id="PF16198">
    <property type="entry name" value="TruB_C_2"/>
    <property type="match status" value="1"/>
</dbReference>
<dbReference type="Pfam" id="PF01509">
    <property type="entry name" value="TruB_N"/>
    <property type="match status" value="1"/>
</dbReference>
<dbReference type="SUPFAM" id="SSF55120">
    <property type="entry name" value="Pseudouridine synthase"/>
    <property type="match status" value="1"/>
</dbReference>